<keyword id="KW-0106">Calcium</keyword>
<keyword id="KW-1015">Disulfide bond</keyword>
<keyword id="KW-0378">Hydrolase</keyword>
<keyword id="KW-0442">Lipid degradation</keyword>
<keyword id="KW-0443">Lipid metabolism</keyword>
<keyword id="KW-0479">Metal-binding</keyword>
<keyword id="KW-1185">Reference proteome</keyword>
<keyword id="KW-0964">Secreted</keyword>
<keyword id="KW-0732">Signal</keyword>
<evidence type="ECO:0000250" key="1"/>
<evidence type="ECO:0000250" key="2">
    <source>
        <dbReference type="UniProtKB" id="P16233"/>
    </source>
</evidence>
<evidence type="ECO:0000255" key="3">
    <source>
        <dbReference type="PROSITE-ProRule" id="PRU00152"/>
    </source>
</evidence>
<evidence type="ECO:0000255" key="4">
    <source>
        <dbReference type="PROSITE-ProRule" id="PRU10037"/>
    </source>
</evidence>
<evidence type="ECO:0000305" key="5"/>
<dbReference type="EC" id="3.1.1.3" evidence="2"/>
<dbReference type="EMBL" id="M99365">
    <property type="protein sequence ID" value="AAA31489.1"/>
    <property type="molecule type" value="mRNA"/>
</dbReference>
<dbReference type="PIR" id="JC1318">
    <property type="entry name" value="JC1318"/>
</dbReference>
<dbReference type="RefSeq" id="NP_001075786.1">
    <property type="nucleotide sequence ID" value="NM_001082317.1"/>
</dbReference>
<dbReference type="SMR" id="Q02157"/>
<dbReference type="FunCoup" id="Q02157">
    <property type="interactions" value="78"/>
</dbReference>
<dbReference type="STRING" id="9986.ENSOCUP00000039779"/>
<dbReference type="ESTHER" id="rabit-1plip">
    <property type="family name" value="Pancreatic_lipase"/>
</dbReference>
<dbReference type="PaxDb" id="9986-ENSOCUP00000012518"/>
<dbReference type="GeneID" id="100009157"/>
<dbReference type="KEGG" id="ocu:100009157"/>
<dbReference type="CTD" id="5406"/>
<dbReference type="eggNOG" id="ENOG502QUK7">
    <property type="taxonomic scope" value="Eukaryota"/>
</dbReference>
<dbReference type="InParanoid" id="Q02157"/>
<dbReference type="OrthoDB" id="199913at2759"/>
<dbReference type="Proteomes" id="UP000001811">
    <property type="component" value="Unplaced"/>
</dbReference>
<dbReference type="GO" id="GO:0005615">
    <property type="term" value="C:extracellular space"/>
    <property type="evidence" value="ECO:0007669"/>
    <property type="project" value="TreeGrafter"/>
</dbReference>
<dbReference type="GO" id="GO:0047376">
    <property type="term" value="F:all-trans-retinyl-palmitate hydrolase, all-trans-retinol forming activity"/>
    <property type="evidence" value="ECO:0007669"/>
    <property type="project" value="RHEA"/>
</dbReference>
<dbReference type="GO" id="GO:0004465">
    <property type="term" value="F:lipoprotein lipase activity"/>
    <property type="evidence" value="ECO:0007669"/>
    <property type="project" value="TreeGrafter"/>
</dbReference>
<dbReference type="GO" id="GO:0046872">
    <property type="term" value="F:metal ion binding"/>
    <property type="evidence" value="ECO:0007669"/>
    <property type="project" value="UniProtKB-KW"/>
</dbReference>
<dbReference type="GO" id="GO:0004806">
    <property type="term" value="F:triacylglycerol lipase activity"/>
    <property type="evidence" value="ECO:0000250"/>
    <property type="project" value="UniProtKB"/>
</dbReference>
<dbReference type="GO" id="GO:0016042">
    <property type="term" value="P:lipid catabolic process"/>
    <property type="evidence" value="ECO:0007669"/>
    <property type="project" value="UniProtKB-KW"/>
</dbReference>
<dbReference type="CDD" id="cd00707">
    <property type="entry name" value="Pancreat_lipase_like"/>
    <property type="match status" value="1"/>
</dbReference>
<dbReference type="CDD" id="cd01759">
    <property type="entry name" value="PLAT_PL"/>
    <property type="match status" value="1"/>
</dbReference>
<dbReference type="FunFam" id="3.40.50.1820:FF:000033">
    <property type="entry name" value="Pancreatic triacylglycerol lipase"/>
    <property type="match status" value="1"/>
</dbReference>
<dbReference type="FunFam" id="2.60.60.20:FF:000003">
    <property type="entry name" value="Triacylglycerol lipase"/>
    <property type="match status" value="1"/>
</dbReference>
<dbReference type="Gene3D" id="3.40.50.1820">
    <property type="entry name" value="alpha/beta hydrolase"/>
    <property type="match status" value="1"/>
</dbReference>
<dbReference type="Gene3D" id="2.60.60.20">
    <property type="entry name" value="PLAT/LH2 domain"/>
    <property type="match status" value="1"/>
</dbReference>
<dbReference type="InterPro" id="IPR029058">
    <property type="entry name" value="AB_hydrolase_fold"/>
</dbReference>
<dbReference type="InterPro" id="IPR013818">
    <property type="entry name" value="Lipase"/>
</dbReference>
<dbReference type="InterPro" id="IPR016272">
    <property type="entry name" value="Lipase_LIPH"/>
</dbReference>
<dbReference type="InterPro" id="IPR033906">
    <property type="entry name" value="Lipase_N"/>
</dbReference>
<dbReference type="InterPro" id="IPR002331">
    <property type="entry name" value="Lipase_panc"/>
</dbReference>
<dbReference type="InterPro" id="IPR001024">
    <property type="entry name" value="PLAT/LH2_dom"/>
</dbReference>
<dbReference type="InterPro" id="IPR036392">
    <property type="entry name" value="PLAT/LH2_dom_sf"/>
</dbReference>
<dbReference type="InterPro" id="IPR000734">
    <property type="entry name" value="TAG_lipase"/>
</dbReference>
<dbReference type="PANTHER" id="PTHR11610">
    <property type="entry name" value="LIPASE"/>
    <property type="match status" value="1"/>
</dbReference>
<dbReference type="PANTHER" id="PTHR11610:SF147">
    <property type="entry name" value="PANCREATIC TRIACYLGLYCEROL LIPASE"/>
    <property type="match status" value="1"/>
</dbReference>
<dbReference type="Pfam" id="PF00151">
    <property type="entry name" value="Lipase"/>
    <property type="match status" value="1"/>
</dbReference>
<dbReference type="Pfam" id="PF01477">
    <property type="entry name" value="PLAT"/>
    <property type="match status" value="1"/>
</dbReference>
<dbReference type="PIRSF" id="PIRSF000865">
    <property type="entry name" value="Lipoprotein_lipase_LIPH"/>
    <property type="match status" value="1"/>
</dbReference>
<dbReference type="PRINTS" id="PR00823">
    <property type="entry name" value="PANCLIPASE"/>
</dbReference>
<dbReference type="PRINTS" id="PR00821">
    <property type="entry name" value="TAGLIPASE"/>
</dbReference>
<dbReference type="SMART" id="SM00308">
    <property type="entry name" value="LH2"/>
    <property type="match status" value="1"/>
</dbReference>
<dbReference type="SUPFAM" id="SSF53474">
    <property type="entry name" value="alpha/beta-Hydrolases"/>
    <property type="match status" value="1"/>
</dbReference>
<dbReference type="SUPFAM" id="SSF49723">
    <property type="entry name" value="Lipase/lipooxygenase domain (PLAT/LH2 domain)"/>
    <property type="match status" value="1"/>
</dbReference>
<dbReference type="PROSITE" id="PS00120">
    <property type="entry name" value="LIPASE_SER"/>
    <property type="match status" value="1"/>
</dbReference>
<dbReference type="PROSITE" id="PS50095">
    <property type="entry name" value="PLAT"/>
    <property type="match status" value="1"/>
</dbReference>
<protein>
    <recommendedName>
        <fullName evidence="5">Pancreatic triacylglycerol lipase</fullName>
        <shortName>PL</shortName>
        <shortName>PTL</shortName>
        <shortName>Pancreatic lipase</shortName>
        <ecNumber evidence="2">3.1.1.3</ecNumber>
    </recommendedName>
</protein>
<organism>
    <name type="scientific">Oryctolagus cuniculus</name>
    <name type="common">Rabbit</name>
    <dbReference type="NCBI Taxonomy" id="9986"/>
    <lineage>
        <taxon>Eukaryota</taxon>
        <taxon>Metazoa</taxon>
        <taxon>Chordata</taxon>
        <taxon>Craniata</taxon>
        <taxon>Vertebrata</taxon>
        <taxon>Euteleostomi</taxon>
        <taxon>Mammalia</taxon>
        <taxon>Eutheria</taxon>
        <taxon>Euarchontoglires</taxon>
        <taxon>Glires</taxon>
        <taxon>Lagomorpha</taxon>
        <taxon>Leporidae</taxon>
        <taxon>Oryctolagus</taxon>
    </lineage>
</organism>
<reference key="1">
    <citation type="journal article" date="1992" name="Biochem. Biophys. Res. Commun.">
        <title>Molecular cloning and characterization of rabbit pancreatic triglyceride lipase.</title>
        <authorList>
            <person name="Aleman-Gomez J.A."/>
            <person name="Colwell N.S."/>
            <person name="Sasser T."/>
            <person name="Kumar V.B."/>
        </authorList>
    </citation>
    <scope>NUCLEOTIDE SEQUENCE [MRNA]</scope>
</reference>
<accession>Q02157</accession>
<feature type="signal peptide" evidence="1">
    <location>
        <begin position="1"/>
        <end position="16"/>
    </location>
</feature>
<feature type="chain" id="PRO_0000017787" description="Pancreatic triacylglycerol lipase">
    <location>
        <begin position="17"/>
        <end position="465"/>
    </location>
</feature>
<feature type="domain" description="PLAT" evidence="3">
    <location>
        <begin position="355"/>
        <end position="465"/>
    </location>
</feature>
<feature type="active site" description="Nucleophile" evidence="1">
    <location>
        <position position="170"/>
    </location>
</feature>
<feature type="active site" description="Charge relay system" evidence="4">
    <location>
        <position position="194"/>
    </location>
</feature>
<feature type="active site" description="Charge relay system" evidence="4">
    <location>
        <position position="281"/>
    </location>
</feature>
<feature type="binding site" evidence="1">
    <location>
        <position position="205"/>
    </location>
    <ligand>
        <name>Ca(2+)</name>
        <dbReference type="ChEBI" id="CHEBI:29108"/>
    </ligand>
</feature>
<feature type="binding site" evidence="1">
    <location>
        <position position="208"/>
    </location>
    <ligand>
        <name>Ca(2+)</name>
        <dbReference type="ChEBI" id="CHEBI:29108"/>
    </ligand>
</feature>
<feature type="binding site" evidence="1">
    <location>
        <position position="210"/>
    </location>
    <ligand>
        <name>Ca(2+)</name>
        <dbReference type="ChEBI" id="CHEBI:29108"/>
    </ligand>
</feature>
<feature type="binding site" evidence="1">
    <location>
        <position position="213"/>
    </location>
    <ligand>
        <name>Ca(2+)</name>
        <dbReference type="ChEBI" id="CHEBI:29108"/>
    </ligand>
</feature>
<feature type="disulfide bond" evidence="3">
    <location>
        <begin position="20"/>
        <end position="26"/>
    </location>
</feature>
<feature type="disulfide bond" evidence="3">
    <location>
        <begin position="108"/>
        <end position="119"/>
    </location>
</feature>
<feature type="disulfide bond" evidence="3">
    <location>
        <begin position="255"/>
        <end position="279"/>
    </location>
</feature>
<feature type="disulfide bond" evidence="3">
    <location>
        <begin position="303"/>
        <end position="314"/>
    </location>
</feature>
<feature type="disulfide bond" evidence="3">
    <location>
        <begin position="317"/>
        <end position="321"/>
    </location>
</feature>
<feature type="disulfide bond" evidence="3">
    <location>
        <begin position="449"/>
        <end position="465"/>
    </location>
</feature>
<proteinExistence type="evidence at transcript level"/>
<comment type="function">
    <text evidence="2">Plays an important role in fat metabolism. It preferentially splits the esters of long-chain fatty acids at positions 1 and 3, producing mainly 2-monoacylglycerol and free fatty acids, and shows considerably higher activity against insoluble emulsified substrates than against soluble ones.</text>
</comment>
<comment type="catalytic activity">
    <reaction evidence="2">
        <text>a triacylglycerol + H2O = a diacylglycerol + a fatty acid + H(+)</text>
        <dbReference type="Rhea" id="RHEA:12044"/>
        <dbReference type="ChEBI" id="CHEBI:15377"/>
        <dbReference type="ChEBI" id="CHEBI:15378"/>
        <dbReference type="ChEBI" id="CHEBI:17855"/>
        <dbReference type="ChEBI" id="CHEBI:18035"/>
        <dbReference type="ChEBI" id="CHEBI:28868"/>
        <dbReference type="EC" id="3.1.1.3"/>
    </reaction>
    <physiologicalReaction direction="left-to-right" evidence="2">
        <dbReference type="Rhea" id="RHEA:12045"/>
    </physiologicalReaction>
</comment>
<comment type="catalytic activity">
    <reaction evidence="2">
        <text>1,2,3-tributanoylglycerol + H2O = dibutanoylglycerol + butanoate + H(+)</text>
        <dbReference type="Rhea" id="RHEA:40475"/>
        <dbReference type="ChEBI" id="CHEBI:15377"/>
        <dbReference type="ChEBI" id="CHEBI:15378"/>
        <dbReference type="ChEBI" id="CHEBI:17968"/>
        <dbReference type="ChEBI" id="CHEBI:35020"/>
        <dbReference type="ChEBI" id="CHEBI:76478"/>
    </reaction>
    <physiologicalReaction direction="left-to-right" evidence="2">
        <dbReference type="Rhea" id="RHEA:40476"/>
    </physiologicalReaction>
</comment>
<comment type="catalytic activity">
    <reaction evidence="2">
        <text>1,2,3-tri-(9Z-octadecenoyl)-glycerol + H2O = di-(9Z)-octadecenoylglycerol + (9Z)-octadecenoate + H(+)</text>
        <dbReference type="Rhea" id="RHEA:38575"/>
        <dbReference type="ChEBI" id="CHEBI:15377"/>
        <dbReference type="ChEBI" id="CHEBI:15378"/>
        <dbReference type="ChEBI" id="CHEBI:30823"/>
        <dbReference type="ChEBI" id="CHEBI:53753"/>
        <dbReference type="ChEBI" id="CHEBI:75945"/>
    </reaction>
    <physiologicalReaction direction="left-to-right" evidence="2">
        <dbReference type="Rhea" id="RHEA:38576"/>
    </physiologicalReaction>
</comment>
<comment type="catalytic activity">
    <reaction evidence="2">
        <text>all-trans-retinyl hexadecanoate + H2O = all-trans-retinol + hexadecanoate + H(+)</text>
        <dbReference type="Rhea" id="RHEA:13933"/>
        <dbReference type="ChEBI" id="CHEBI:7896"/>
        <dbReference type="ChEBI" id="CHEBI:15377"/>
        <dbReference type="ChEBI" id="CHEBI:15378"/>
        <dbReference type="ChEBI" id="CHEBI:17336"/>
        <dbReference type="ChEBI" id="CHEBI:17616"/>
    </reaction>
    <physiologicalReaction direction="left-to-right" evidence="2">
        <dbReference type="Rhea" id="RHEA:13934"/>
    </physiologicalReaction>
</comment>
<comment type="catalytic activity">
    <reaction evidence="2">
        <text>1,2-di-(9Z-octadecenoyl)-glycerol + H2O = (9Z-octadecenoyl)-glycerol + (9Z)-octadecenoate + H(+)</text>
        <dbReference type="Rhea" id="RHEA:38455"/>
        <dbReference type="ChEBI" id="CHEBI:15377"/>
        <dbReference type="ChEBI" id="CHEBI:15378"/>
        <dbReference type="ChEBI" id="CHEBI:30823"/>
        <dbReference type="ChEBI" id="CHEBI:52323"/>
        <dbReference type="ChEBI" id="CHEBI:75937"/>
    </reaction>
    <physiologicalReaction direction="left-to-right" evidence="2">
        <dbReference type="Rhea" id="RHEA:38456"/>
    </physiologicalReaction>
</comment>
<comment type="activity regulation">
    <text evidence="2">Inhibited by bile salts, is reactivated by (pro)colipase/CLPS.</text>
</comment>
<comment type="subunit">
    <text evidence="2">Forms a 1:1 stoichiometric complex with (pro)colipase/CLPS.</text>
</comment>
<comment type="subcellular location">
    <subcellularLocation>
        <location evidence="2">Secreted</location>
    </subcellularLocation>
</comment>
<comment type="similarity">
    <text evidence="5">Belongs to the AB hydrolase superfamily. Lipase family.</text>
</comment>
<gene>
    <name type="primary">PNLIP</name>
</gene>
<sequence>MLLLWALPLLLGAVAGLEVCYERLGCFGNRIPWSGGTLERPFSTLPSTPKIVNTRFLLYTNENPNNFQEISADASTIRGSNFRTDRKTRFIIHGFTDKGEENWLSNLCENLFQVETVNCICVDWKGGSRTTYPQATQNIRIVGAEVAYLVGTLQSSLGYSPSNIHVIGHSLGAHAAGEVGRRTNGTIGRITGLDPAEPYFQGTPEIVRLDPSDAQFVDVIHTDAAPMVPNLGFGMSQTVGHLDFFPNGGKEMPGCQKNVLSQIVDINGVWEGTRDFVACNHLRSYKYYADSIVNPNGFAGFSCASYTAFSANKCFPCSNGCPQMGHYADRFSRKTDGVGQTFYLNTGDSSNFARWRYQVAVTLSGRRVTGHVLVSLYGSKGNSKQYEIFTGLLKPGDTHLNEFDSDVDVGDVQKVKFVWYNNVINPTLPKVGASQITVEQNDGRVFKFCSTDTVREDILLTLTPC</sequence>
<name>LIPP_RABIT</name>